<feature type="chain" id="PRO_0000448440" description="Protein DOUBLE-STRAND BREAK FORMATION">
    <location>
        <begin position="1"/>
        <end position="233"/>
    </location>
</feature>
<feature type="splice variant" id="VSP_060397" description="In isoform 2.">
    <original>GIFIYIVSSLKFAVCNRLLTTF</original>
    <variation>VQAQGAGYLRSKEHRIQSRQTLPTKNPDCTGSNLFREGIKKRNERMLQDLRSIRMNRNLEPDVRCV</variation>
    <location>
        <begin position="212"/>
        <end position="233"/>
    </location>
</feature>
<protein>
    <recommendedName>
        <fullName evidence="3">Protein DOUBLE-STRAND BREAK FORMATION</fullName>
        <shortName evidence="3">AtDFO</shortName>
        <shortName evidence="3">Protein DSB FORMATION</shortName>
    </recommendedName>
</protein>
<name>DFO_ARATH</name>
<reference key="1">
    <citation type="journal article" date="2000" name="Nature">
        <title>Sequence and analysis of chromosome 1 of the plant Arabidopsis thaliana.</title>
        <authorList>
            <person name="Theologis A."/>
            <person name="Ecker J.R."/>
            <person name="Palm C.J."/>
            <person name="Federspiel N.A."/>
            <person name="Kaul S."/>
            <person name="White O."/>
            <person name="Alonso J."/>
            <person name="Altafi H."/>
            <person name="Araujo R."/>
            <person name="Bowman C.L."/>
            <person name="Brooks S.Y."/>
            <person name="Buehler E."/>
            <person name="Chan A."/>
            <person name="Chao Q."/>
            <person name="Chen H."/>
            <person name="Cheuk R.F."/>
            <person name="Chin C.W."/>
            <person name="Chung M.K."/>
            <person name="Conn L."/>
            <person name="Conway A.B."/>
            <person name="Conway A.R."/>
            <person name="Creasy T.H."/>
            <person name="Dewar K."/>
            <person name="Dunn P."/>
            <person name="Etgu P."/>
            <person name="Feldblyum T.V."/>
            <person name="Feng J.-D."/>
            <person name="Fong B."/>
            <person name="Fujii C.Y."/>
            <person name="Gill J.E."/>
            <person name="Goldsmith A.D."/>
            <person name="Haas B."/>
            <person name="Hansen N.F."/>
            <person name="Hughes B."/>
            <person name="Huizar L."/>
            <person name="Hunter J.L."/>
            <person name="Jenkins J."/>
            <person name="Johnson-Hopson C."/>
            <person name="Khan S."/>
            <person name="Khaykin E."/>
            <person name="Kim C.J."/>
            <person name="Koo H.L."/>
            <person name="Kremenetskaia I."/>
            <person name="Kurtz D.B."/>
            <person name="Kwan A."/>
            <person name="Lam B."/>
            <person name="Langin-Hooper S."/>
            <person name="Lee A."/>
            <person name="Lee J.M."/>
            <person name="Lenz C.A."/>
            <person name="Li J.H."/>
            <person name="Li Y.-P."/>
            <person name="Lin X."/>
            <person name="Liu S.X."/>
            <person name="Liu Z.A."/>
            <person name="Luros J.S."/>
            <person name="Maiti R."/>
            <person name="Marziali A."/>
            <person name="Militscher J."/>
            <person name="Miranda M."/>
            <person name="Nguyen M."/>
            <person name="Nierman W.C."/>
            <person name="Osborne B.I."/>
            <person name="Pai G."/>
            <person name="Peterson J."/>
            <person name="Pham P.K."/>
            <person name="Rizzo M."/>
            <person name="Rooney T."/>
            <person name="Rowley D."/>
            <person name="Sakano H."/>
            <person name="Salzberg S.L."/>
            <person name="Schwartz J.R."/>
            <person name="Shinn P."/>
            <person name="Southwick A.M."/>
            <person name="Sun H."/>
            <person name="Tallon L.J."/>
            <person name="Tambunga G."/>
            <person name="Toriumi M.J."/>
            <person name="Town C.D."/>
            <person name="Utterback T."/>
            <person name="Van Aken S."/>
            <person name="Vaysberg M."/>
            <person name="Vysotskaia V.S."/>
            <person name="Walker M."/>
            <person name="Wu D."/>
            <person name="Yu G."/>
            <person name="Fraser C.M."/>
            <person name="Venter J.C."/>
            <person name="Davis R.W."/>
        </authorList>
    </citation>
    <scope>NUCLEOTIDE SEQUENCE [LARGE SCALE GENOMIC DNA]</scope>
    <source>
        <strain>cv. Columbia</strain>
    </source>
</reference>
<reference key="2">
    <citation type="journal article" date="2017" name="Plant J.">
        <title>Araport11: a complete reannotation of the Arabidopsis thaliana reference genome.</title>
        <authorList>
            <person name="Cheng C.Y."/>
            <person name="Krishnakumar V."/>
            <person name="Chan A.P."/>
            <person name="Thibaud-Nissen F."/>
            <person name="Schobel S."/>
            <person name="Town C.D."/>
        </authorList>
    </citation>
    <scope>GENOME REANNOTATION</scope>
    <source>
        <strain>cv. Columbia</strain>
    </source>
</reference>
<reference key="3">
    <citation type="journal article" date="2003" name="Science">
        <title>Empirical analysis of transcriptional activity in the Arabidopsis genome.</title>
        <authorList>
            <person name="Yamada K."/>
            <person name="Lim J."/>
            <person name="Dale J.M."/>
            <person name="Chen H."/>
            <person name="Shinn P."/>
            <person name="Palm C.J."/>
            <person name="Southwick A.M."/>
            <person name="Wu H.C."/>
            <person name="Kim C.J."/>
            <person name="Nguyen M."/>
            <person name="Pham P.K."/>
            <person name="Cheuk R.F."/>
            <person name="Karlin-Newmann G."/>
            <person name="Liu S.X."/>
            <person name="Lam B."/>
            <person name="Sakano H."/>
            <person name="Wu T."/>
            <person name="Yu G."/>
            <person name="Miranda M."/>
            <person name="Quach H.L."/>
            <person name="Tripp M."/>
            <person name="Chang C.H."/>
            <person name="Lee J.M."/>
            <person name="Toriumi M.J."/>
            <person name="Chan M.M."/>
            <person name="Tang C.C."/>
            <person name="Onodera C.S."/>
            <person name="Deng J.M."/>
            <person name="Akiyama K."/>
            <person name="Ansari Y."/>
            <person name="Arakawa T."/>
            <person name="Banh J."/>
            <person name="Banno F."/>
            <person name="Bowser L."/>
            <person name="Brooks S.Y."/>
            <person name="Carninci P."/>
            <person name="Chao Q."/>
            <person name="Choy N."/>
            <person name="Enju A."/>
            <person name="Goldsmith A.D."/>
            <person name="Gurjal M."/>
            <person name="Hansen N.F."/>
            <person name="Hayashizaki Y."/>
            <person name="Johnson-Hopson C."/>
            <person name="Hsuan V.W."/>
            <person name="Iida K."/>
            <person name="Karnes M."/>
            <person name="Khan S."/>
            <person name="Koesema E."/>
            <person name="Ishida J."/>
            <person name="Jiang P.X."/>
            <person name="Jones T."/>
            <person name="Kawai J."/>
            <person name="Kamiya A."/>
            <person name="Meyers C."/>
            <person name="Nakajima M."/>
            <person name="Narusaka M."/>
            <person name="Seki M."/>
            <person name="Sakurai T."/>
            <person name="Satou M."/>
            <person name="Tamse R."/>
            <person name="Vaysberg M."/>
            <person name="Wallender E.K."/>
            <person name="Wong C."/>
            <person name="Yamamura Y."/>
            <person name="Yuan S."/>
            <person name="Shinozaki K."/>
            <person name="Davis R.W."/>
            <person name="Theologis A."/>
            <person name="Ecker J.R."/>
        </authorList>
    </citation>
    <scope>NUCLEOTIDE SEQUENCE [LARGE SCALE MRNA] (ISOFORM 1)</scope>
    <source>
        <strain>cv. Columbia</strain>
    </source>
</reference>
<reference key="4">
    <citation type="journal article" date="2012" name="Plant J.">
        <title>The Arabidopsis thaliana DSB formation (AtDFO) gene is required for meiotic double-strand break formation.</title>
        <authorList>
            <person name="Zhang C."/>
            <person name="Song Y."/>
            <person name="Cheng Z.-H."/>
            <person name="Wang Y.-X."/>
            <person name="Zhu J."/>
            <person name="Ma H."/>
            <person name="Xu L."/>
            <person name="Yang Z.-N."/>
        </authorList>
    </citation>
    <scope>FUNCTION</scope>
    <scope>DISRUPTION PHENOTYPE</scope>
    <scope>TISSUE SPECIFICITY</scope>
    <scope>DEVELOPMENTAL STAGE</scope>
    <source>
        <strain>cv. Columbia</strain>
    </source>
</reference>
<reference key="5">
    <citation type="journal article" date="2017" name="Sci. Rep.">
        <title>MTOPVIB interacts with AtPRD1 and plays important roles in formation of meiotic DNA double-strand breaks in Arabidopsis.</title>
        <authorList>
            <person name="Tang Y."/>
            <person name="Yin Z."/>
            <person name="Zeng Y."/>
            <person name="Zhang Q."/>
            <person name="Chen L."/>
            <person name="He Y."/>
            <person name="Lu P."/>
            <person name="Ye D."/>
            <person name="Zhang X."/>
        </authorList>
    </citation>
    <scope>INTERACTION WITH PRD1</scope>
    <source>
        <strain>cv. Columbia</strain>
        <strain>cv. Landsberg erecta</strain>
    </source>
</reference>
<organism>
    <name type="scientific">Arabidopsis thaliana</name>
    <name type="common">Mouse-ear cress</name>
    <dbReference type="NCBI Taxonomy" id="3702"/>
    <lineage>
        <taxon>Eukaryota</taxon>
        <taxon>Viridiplantae</taxon>
        <taxon>Streptophyta</taxon>
        <taxon>Embryophyta</taxon>
        <taxon>Tracheophyta</taxon>
        <taxon>Spermatophyta</taxon>
        <taxon>Magnoliopsida</taxon>
        <taxon>eudicotyledons</taxon>
        <taxon>Gunneridae</taxon>
        <taxon>Pentapetalae</taxon>
        <taxon>rosids</taxon>
        <taxon>malvids</taxon>
        <taxon>Brassicales</taxon>
        <taxon>Brassicaceae</taxon>
        <taxon>Camelineae</taxon>
        <taxon>Arabidopsis</taxon>
    </lineage>
</organism>
<evidence type="ECO:0000269" key="1">
    <source>
    </source>
</evidence>
<evidence type="ECO:0000269" key="2">
    <source>
    </source>
</evidence>
<evidence type="ECO:0000303" key="3">
    <source>
    </source>
</evidence>
<evidence type="ECO:0000312" key="4">
    <source>
        <dbReference type="Araport" id="AT1G07060"/>
    </source>
</evidence>
<evidence type="ECO:0000312" key="5">
    <source>
        <dbReference type="EMBL" id="AAF82214.1"/>
    </source>
</evidence>
<proteinExistence type="evidence at protein level"/>
<accession>Q8RX33</accession>
<accession>Q9LMJ9</accession>
<comment type="function">
    <text evidence="1">Required for meiotic double-strand break (DSB) formation, the initial event for meiotic recombination.</text>
</comment>
<comment type="subunit">
    <text evidence="2">Interacts with PRD1; this interaction facilitates a binding to PRD3.</text>
</comment>
<comment type="alternative products">
    <event type="alternative splicing"/>
    <isoform>
        <id>Q8RX33-1</id>
        <name>1</name>
        <sequence type="displayed"/>
    </isoform>
    <isoform>
        <id>Q8RX33-2</id>
        <name>2</name>
        <sequence type="described" ref="VSP_060397"/>
    </isoform>
</comment>
<comment type="tissue specificity">
    <text evidence="1">Specifically expressed in buds.</text>
</comment>
<comment type="developmental stage">
    <text evidence="1">In flowers, first detected at the early anther development stages with stronger expression at stages 6 and 7 (PubMed:22694475). Also observed during ovule development with high levels during meiosis (PubMed:22694475).</text>
</comment>
<comment type="disruption phenotype">
    <text evidence="1">Reduced fertility upon self-pollination, producing polyads with an abnormal number of microspores during pollen formation (PubMed:22694475). Meiocytes are defective in homologous chromosome synapsis and segregation (PubMed:22694475). Homologous recombination is severely affected during meiotic prophase I (PubMed:22694475).</text>
</comment>
<gene>
    <name evidence="3" type="primary">DFO</name>
    <name evidence="4" type="ordered locus">At1g07060</name>
    <name evidence="5" type="ORF">F10K1.23</name>
</gene>
<keyword id="KW-0025">Alternative splicing</keyword>
<keyword id="KW-0469">Meiosis</keyword>
<keyword id="KW-1185">Reference proteome</keyword>
<sequence>MRHNIKFKSKGTLKIRNTAQISLWKKCSDSMIADQTYLFINRVQDRRFDEESLRILELSLVAMNVKSFLEVRSRLRDFMRSESVVIFGELTGESMVAKLSVLEFFARAFALLGDMESCLAMRYEALNLRQLKSPSCLWLGVSHSEWTKFAVQSMENGFPSIAGKASENALLSLKKDSLIEPKSEDNSDILDAAEKVRRLRDSAASLTSSHSGIFIYIVSSLKFAVCNRLLTTF</sequence>
<dbReference type="EMBL" id="AC067971">
    <property type="protein sequence ID" value="AAF82214.1"/>
    <property type="molecule type" value="Genomic_DNA"/>
</dbReference>
<dbReference type="EMBL" id="CP002684">
    <property type="protein sequence ID" value="AEE28073.1"/>
    <property type="molecule type" value="Genomic_DNA"/>
</dbReference>
<dbReference type="EMBL" id="CP002684">
    <property type="protein sequence ID" value="ANM60224.1"/>
    <property type="molecule type" value="Genomic_DNA"/>
</dbReference>
<dbReference type="EMBL" id="AY090924">
    <property type="protein sequence ID" value="AAM13919.1"/>
    <property type="molecule type" value="mRNA"/>
</dbReference>
<dbReference type="PIR" id="D86205">
    <property type="entry name" value="D86205"/>
</dbReference>
<dbReference type="RefSeq" id="NP_001322524.1">
    <molecule id="Q8RX33-2"/>
    <property type="nucleotide sequence ID" value="NM_001331678.1"/>
</dbReference>
<dbReference type="RefSeq" id="NP_172187.1">
    <molecule id="Q8RX33-1"/>
    <property type="nucleotide sequence ID" value="NM_100580.2"/>
</dbReference>
<dbReference type="FunCoup" id="Q8RX33">
    <property type="interactions" value="1"/>
</dbReference>
<dbReference type="STRING" id="3702.Q8RX33"/>
<dbReference type="PaxDb" id="3702-AT1G07060.1"/>
<dbReference type="DNASU" id="837217"/>
<dbReference type="EnsemblPlants" id="AT1G07060.1">
    <molecule id="Q8RX33-1"/>
    <property type="protein sequence ID" value="AT1G07060.1"/>
    <property type="gene ID" value="AT1G07060"/>
</dbReference>
<dbReference type="EnsemblPlants" id="AT1G07060.2">
    <molecule id="Q8RX33-2"/>
    <property type="protein sequence ID" value="AT1G07060.2"/>
    <property type="gene ID" value="AT1G07060"/>
</dbReference>
<dbReference type="GeneID" id="837217"/>
<dbReference type="Gramene" id="AT1G07060.1">
    <molecule id="Q8RX33-1"/>
    <property type="protein sequence ID" value="AT1G07060.1"/>
    <property type="gene ID" value="AT1G07060"/>
</dbReference>
<dbReference type="Gramene" id="AT1G07060.2">
    <molecule id="Q8RX33-2"/>
    <property type="protein sequence ID" value="AT1G07060.2"/>
    <property type="gene ID" value="AT1G07060"/>
</dbReference>
<dbReference type="KEGG" id="ath:AT1G07060"/>
<dbReference type="Araport" id="AT1G07060"/>
<dbReference type="TAIR" id="AT1G07060">
    <property type="gene designation" value="DFO"/>
</dbReference>
<dbReference type="eggNOG" id="ENOG502RXSP">
    <property type="taxonomic scope" value="Eukaryota"/>
</dbReference>
<dbReference type="HOGENOM" id="CLU_098110_0_0_1"/>
<dbReference type="InParanoid" id="Q8RX33"/>
<dbReference type="PhylomeDB" id="Q8RX33"/>
<dbReference type="PRO" id="PR:Q8RX33"/>
<dbReference type="Proteomes" id="UP000006548">
    <property type="component" value="Chromosome 1"/>
</dbReference>
<dbReference type="ExpressionAtlas" id="Q8RX33">
    <property type="expression patterns" value="baseline and differential"/>
</dbReference>
<dbReference type="GO" id="GO:0051321">
    <property type="term" value="P:meiotic cell cycle"/>
    <property type="evidence" value="ECO:0000316"/>
    <property type="project" value="TAIR"/>
</dbReference>
<dbReference type="GO" id="GO:0042138">
    <property type="term" value="P:meiotic DNA double-strand break formation"/>
    <property type="evidence" value="ECO:0000316"/>
    <property type="project" value="TAIR"/>
</dbReference>
<dbReference type="InterPro" id="IPR044969">
    <property type="entry name" value="DFO"/>
</dbReference>
<dbReference type="PANTHER" id="PTHR37176">
    <property type="entry name" value="F10K1.23"/>
    <property type="match status" value="1"/>
</dbReference>
<dbReference type="PANTHER" id="PTHR37176:SF1">
    <property type="entry name" value="PROTEIN DOUBLE-STRAND BREAK FORMATION"/>
    <property type="match status" value="1"/>
</dbReference>